<dbReference type="EC" id="6.1.1.15" evidence="1"/>
<dbReference type="EMBL" id="CP000312">
    <property type="protein sequence ID" value="ABG85522.1"/>
    <property type="molecule type" value="Genomic_DNA"/>
</dbReference>
<dbReference type="RefSeq" id="WP_011593146.1">
    <property type="nucleotide sequence ID" value="NC_008262.1"/>
</dbReference>
<dbReference type="SMR" id="Q0SQC0"/>
<dbReference type="KEGG" id="cpr:CPR_2425"/>
<dbReference type="Proteomes" id="UP000001824">
    <property type="component" value="Chromosome"/>
</dbReference>
<dbReference type="GO" id="GO:0005829">
    <property type="term" value="C:cytosol"/>
    <property type="evidence" value="ECO:0007669"/>
    <property type="project" value="TreeGrafter"/>
</dbReference>
<dbReference type="GO" id="GO:0002161">
    <property type="term" value="F:aminoacyl-tRNA deacylase activity"/>
    <property type="evidence" value="ECO:0007669"/>
    <property type="project" value="InterPro"/>
</dbReference>
<dbReference type="GO" id="GO:0005524">
    <property type="term" value="F:ATP binding"/>
    <property type="evidence" value="ECO:0007669"/>
    <property type="project" value="UniProtKB-UniRule"/>
</dbReference>
<dbReference type="GO" id="GO:0140096">
    <property type="term" value="F:catalytic activity, acting on a protein"/>
    <property type="evidence" value="ECO:0007669"/>
    <property type="project" value="UniProtKB-ARBA"/>
</dbReference>
<dbReference type="GO" id="GO:0004827">
    <property type="term" value="F:proline-tRNA ligase activity"/>
    <property type="evidence" value="ECO:0007669"/>
    <property type="project" value="UniProtKB-UniRule"/>
</dbReference>
<dbReference type="GO" id="GO:0016740">
    <property type="term" value="F:transferase activity"/>
    <property type="evidence" value="ECO:0007669"/>
    <property type="project" value="UniProtKB-ARBA"/>
</dbReference>
<dbReference type="GO" id="GO:0006433">
    <property type="term" value="P:prolyl-tRNA aminoacylation"/>
    <property type="evidence" value="ECO:0007669"/>
    <property type="project" value="UniProtKB-UniRule"/>
</dbReference>
<dbReference type="CDD" id="cd04334">
    <property type="entry name" value="ProRS-INS"/>
    <property type="match status" value="1"/>
</dbReference>
<dbReference type="CDD" id="cd00861">
    <property type="entry name" value="ProRS_anticodon_short"/>
    <property type="match status" value="1"/>
</dbReference>
<dbReference type="CDD" id="cd00779">
    <property type="entry name" value="ProRS_core_prok"/>
    <property type="match status" value="1"/>
</dbReference>
<dbReference type="FunFam" id="3.30.930.10:FF:000065">
    <property type="entry name" value="Proline--tRNA ligase"/>
    <property type="match status" value="1"/>
</dbReference>
<dbReference type="FunFam" id="3.30.930.10:FF:000066">
    <property type="entry name" value="Proline--tRNA ligase"/>
    <property type="match status" value="1"/>
</dbReference>
<dbReference type="FunFam" id="3.40.50.800:FF:000011">
    <property type="entry name" value="Proline--tRNA ligase"/>
    <property type="match status" value="1"/>
</dbReference>
<dbReference type="Gene3D" id="3.40.50.800">
    <property type="entry name" value="Anticodon-binding domain"/>
    <property type="match status" value="1"/>
</dbReference>
<dbReference type="Gene3D" id="3.30.930.10">
    <property type="entry name" value="Bira Bifunctional Protein, Domain 2"/>
    <property type="match status" value="2"/>
</dbReference>
<dbReference type="HAMAP" id="MF_01569">
    <property type="entry name" value="Pro_tRNA_synth_type1"/>
    <property type="match status" value="1"/>
</dbReference>
<dbReference type="InterPro" id="IPR002314">
    <property type="entry name" value="aa-tRNA-synt_IIb"/>
</dbReference>
<dbReference type="InterPro" id="IPR006195">
    <property type="entry name" value="aa-tRNA-synth_II"/>
</dbReference>
<dbReference type="InterPro" id="IPR045864">
    <property type="entry name" value="aa-tRNA-synth_II/BPL/LPL"/>
</dbReference>
<dbReference type="InterPro" id="IPR004154">
    <property type="entry name" value="Anticodon-bd"/>
</dbReference>
<dbReference type="InterPro" id="IPR036621">
    <property type="entry name" value="Anticodon-bd_dom_sf"/>
</dbReference>
<dbReference type="InterPro" id="IPR002316">
    <property type="entry name" value="Pro-tRNA-ligase_IIa"/>
</dbReference>
<dbReference type="InterPro" id="IPR004500">
    <property type="entry name" value="Pro-tRNA-synth_IIa_bac-type"/>
</dbReference>
<dbReference type="InterPro" id="IPR023717">
    <property type="entry name" value="Pro-tRNA-Synthase_IIa_type1"/>
</dbReference>
<dbReference type="InterPro" id="IPR050062">
    <property type="entry name" value="Pro-tRNA_synthetase"/>
</dbReference>
<dbReference type="InterPro" id="IPR044140">
    <property type="entry name" value="ProRS_anticodon_short"/>
</dbReference>
<dbReference type="InterPro" id="IPR033730">
    <property type="entry name" value="ProRS_core_prok"/>
</dbReference>
<dbReference type="InterPro" id="IPR036754">
    <property type="entry name" value="YbaK/aa-tRNA-synt-asso_dom_sf"/>
</dbReference>
<dbReference type="InterPro" id="IPR007214">
    <property type="entry name" value="YbaK/aa-tRNA-synth-assoc-dom"/>
</dbReference>
<dbReference type="NCBIfam" id="NF006625">
    <property type="entry name" value="PRK09194.1"/>
    <property type="match status" value="1"/>
</dbReference>
<dbReference type="NCBIfam" id="TIGR00409">
    <property type="entry name" value="proS_fam_II"/>
    <property type="match status" value="1"/>
</dbReference>
<dbReference type="PANTHER" id="PTHR42753">
    <property type="entry name" value="MITOCHONDRIAL RIBOSOME PROTEIN L39/PROLYL-TRNA LIGASE FAMILY MEMBER"/>
    <property type="match status" value="1"/>
</dbReference>
<dbReference type="PANTHER" id="PTHR42753:SF2">
    <property type="entry name" value="PROLINE--TRNA LIGASE"/>
    <property type="match status" value="1"/>
</dbReference>
<dbReference type="Pfam" id="PF03129">
    <property type="entry name" value="HGTP_anticodon"/>
    <property type="match status" value="1"/>
</dbReference>
<dbReference type="Pfam" id="PF00587">
    <property type="entry name" value="tRNA-synt_2b"/>
    <property type="match status" value="1"/>
</dbReference>
<dbReference type="Pfam" id="PF04073">
    <property type="entry name" value="tRNA_edit"/>
    <property type="match status" value="1"/>
</dbReference>
<dbReference type="PIRSF" id="PIRSF001535">
    <property type="entry name" value="ProRS_1"/>
    <property type="match status" value="1"/>
</dbReference>
<dbReference type="PRINTS" id="PR01046">
    <property type="entry name" value="TRNASYNTHPRO"/>
</dbReference>
<dbReference type="SUPFAM" id="SSF52954">
    <property type="entry name" value="Class II aaRS ABD-related"/>
    <property type="match status" value="1"/>
</dbReference>
<dbReference type="SUPFAM" id="SSF55681">
    <property type="entry name" value="Class II aaRS and biotin synthetases"/>
    <property type="match status" value="1"/>
</dbReference>
<dbReference type="SUPFAM" id="SSF55826">
    <property type="entry name" value="YbaK/ProRS associated domain"/>
    <property type="match status" value="1"/>
</dbReference>
<dbReference type="PROSITE" id="PS50862">
    <property type="entry name" value="AA_TRNA_LIGASE_II"/>
    <property type="match status" value="1"/>
</dbReference>
<protein>
    <recommendedName>
        <fullName evidence="1">Proline--tRNA ligase</fullName>
        <ecNumber evidence="1">6.1.1.15</ecNumber>
    </recommendedName>
    <alternativeName>
        <fullName evidence="1">Prolyl-tRNA synthetase</fullName>
        <shortName evidence="1">ProRS</shortName>
    </alternativeName>
</protein>
<accession>Q0SQC0</accession>
<reference key="1">
    <citation type="journal article" date="2006" name="Genome Res.">
        <title>Skewed genomic variability in strains of the toxigenic bacterial pathogen, Clostridium perfringens.</title>
        <authorList>
            <person name="Myers G.S.A."/>
            <person name="Rasko D.A."/>
            <person name="Cheung J.K."/>
            <person name="Ravel J."/>
            <person name="Seshadri R."/>
            <person name="DeBoy R.T."/>
            <person name="Ren Q."/>
            <person name="Varga J."/>
            <person name="Awad M.M."/>
            <person name="Brinkac L.M."/>
            <person name="Daugherty S.C."/>
            <person name="Haft D.H."/>
            <person name="Dodson R.J."/>
            <person name="Madupu R."/>
            <person name="Nelson W.C."/>
            <person name="Rosovitz M.J."/>
            <person name="Sullivan S.A."/>
            <person name="Khouri H."/>
            <person name="Dimitrov G.I."/>
            <person name="Watkins K.L."/>
            <person name="Mulligan S."/>
            <person name="Benton J."/>
            <person name="Radune D."/>
            <person name="Fisher D.J."/>
            <person name="Atkins H.S."/>
            <person name="Hiscox T."/>
            <person name="Jost B.H."/>
            <person name="Billington S.J."/>
            <person name="Songer J.G."/>
            <person name="McClane B.A."/>
            <person name="Titball R.W."/>
            <person name="Rood J.I."/>
            <person name="Melville S.B."/>
            <person name="Paulsen I.T."/>
        </authorList>
    </citation>
    <scope>NUCLEOTIDE SEQUENCE [LARGE SCALE GENOMIC DNA]</scope>
    <source>
        <strain>SM101 / Type A</strain>
    </source>
</reference>
<evidence type="ECO:0000255" key="1">
    <source>
        <dbReference type="HAMAP-Rule" id="MF_01569"/>
    </source>
</evidence>
<comment type="function">
    <text evidence="1">Catalyzes the attachment of proline to tRNA(Pro) in a two-step reaction: proline is first activated by ATP to form Pro-AMP and then transferred to the acceptor end of tRNA(Pro). As ProRS can inadvertently accommodate and process non-cognate amino acids such as alanine and cysteine, to avoid such errors it has two additional distinct editing activities against alanine. One activity is designated as 'pretransfer' editing and involves the tRNA(Pro)-independent hydrolysis of activated Ala-AMP. The other activity is designated 'posttransfer' editing and involves deacylation of mischarged Ala-tRNA(Pro). The misacylated Cys-tRNA(Pro) is not edited by ProRS.</text>
</comment>
<comment type="catalytic activity">
    <reaction evidence="1">
        <text>tRNA(Pro) + L-proline + ATP = L-prolyl-tRNA(Pro) + AMP + diphosphate</text>
        <dbReference type="Rhea" id="RHEA:14305"/>
        <dbReference type="Rhea" id="RHEA-COMP:9700"/>
        <dbReference type="Rhea" id="RHEA-COMP:9702"/>
        <dbReference type="ChEBI" id="CHEBI:30616"/>
        <dbReference type="ChEBI" id="CHEBI:33019"/>
        <dbReference type="ChEBI" id="CHEBI:60039"/>
        <dbReference type="ChEBI" id="CHEBI:78442"/>
        <dbReference type="ChEBI" id="CHEBI:78532"/>
        <dbReference type="ChEBI" id="CHEBI:456215"/>
        <dbReference type="EC" id="6.1.1.15"/>
    </reaction>
</comment>
<comment type="subunit">
    <text evidence="1">Homodimer.</text>
</comment>
<comment type="subcellular location">
    <subcellularLocation>
        <location evidence="1">Cytoplasm</location>
    </subcellularLocation>
</comment>
<comment type="domain">
    <text evidence="1">Consists of three domains: the N-terminal catalytic domain, the editing domain and the C-terminal anticodon-binding domain.</text>
</comment>
<comment type="similarity">
    <text evidence="1">Belongs to the class-II aminoacyl-tRNA synthetase family. ProS type 1 subfamily.</text>
</comment>
<feature type="chain" id="PRO_0000288322" description="Proline--tRNA ligase">
    <location>
        <begin position="1"/>
        <end position="570"/>
    </location>
</feature>
<sequence length="570" mass="63797">MKMSNMLVGTLREVPAEAEIESHKLMLRAGLMRKMAAGIYNYMPLGLKVIENVKNIVREEMNNAGAQEFLASALIPAELWQESGRWDAYGAEMFRLKDRHNRDFCLGPTHEEVFTDIVRNEIKSYKQLPLNLYQIQTKYRDERRPRFGVMRSREFIMKDGYSFDKDQEGLDLAYEKMRKAYVNIFNRCGLDAKAVAADSGAIGGSGSAEFMVKSEVGEDDVVFCTACDYAANIEKAPSTPEHAEKEELMEVEKVETPAVKSIEDLAKFFECSPKKIAKTLIFQADDKVVAVVLRGDREANEVKIANAIGEVIELEMASEEAVKEATGAAVGFAGPMGIKVDILLVDQEVANMYNFIIGANETDMHLKNVNYGRDFEGIVGDFRNVTIGEKCPECGKEITISRGTEVGHIFKLGTKYSESMGATFIDEDGKAKPFIMGCYGIGVTRTVASIIEQHNDENGIIWPLEVAPYHVSVIPANVKNEEQATKAEEIYNELRKMGVEALLDDRKERAGVKFKDSELMGIPMRITVGKMIGEGQVEFKLRNGGEVETLSIEEVYNRVRKEFERENLSL</sequence>
<name>SYP_CLOPS</name>
<organism>
    <name type="scientific">Clostridium perfringens (strain SM101 / Type A)</name>
    <dbReference type="NCBI Taxonomy" id="289380"/>
    <lineage>
        <taxon>Bacteria</taxon>
        <taxon>Bacillati</taxon>
        <taxon>Bacillota</taxon>
        <taxon>Clostridia</taxon>
        <taxon>Eubacteriales</taxon>
        <taxon>Clostridiaceae</taxon>
        <taxon>Clostridium</taxon>
    </lineage>
</organism>
<gene>
    <name evidence="1" type="primary">proS</name>
    <name type="ordered locus">CPR_2425</name>
</gene>
<proteinExistence type="inferred from homology"/>
<keyword id="KW-0030">Aminoacyl-tRNA synthetase</keyword>
<keyword id="KW-0067">ATP-binding</keyword>
<keyword id="KW-0963">Cytoplasm</keyword>
<keyword id="KW-0436">Ligase</keyword>
<keyword id="KW-0547">Nucleotide-binding</keyword>
<keyword id="KW-0648">Protein biosynthesis</keyword>